<comment type="similarity">
    <text evidence="2">Belongs to the aldehyde dehydrogenase family.</text>
</comment>
<sequence>MGALVNSEQRQDVQESVNKLIAAGCEVLLGGEADLSAAGAFFPPTLLYCSQPDETPAVHAIEAFGPVATLMPYRDRQHALTLARAGGGSLAGTLVTASGELAREFILGAARAHGRIQILNEASSAESTGHGSPLPQLVHGGPGRAGGGEELGGLRSVKHYMQRTAVQGSPTMLATIGQQWVRGAQVNEDRIHPFRKYFEEIQPGDSLLTPRRTLTEADIVNFACLSGDHFYAHMDKIAAAESIFGERVVHGYFLISAAAGLFVDAGVRPVIANYGMENLRFIEPVKPGDTIQVRLTCKRKTVKHQRSADEKAPAWWNGRWRFSISTSRRWRCIPF</sequence>
<dbReference type="EMBL" id="D10208">
    <property type="protein sequence ID" value="BAA01059.1"/>
    <property type="molecule type" value="Genomic_DNA"/>
</dbReference>
<dbReference type="SMR" id="P49251"/>
<dbReference type="STRING" id="548.EAG7_01321"/>
<dbReference type="GO" id="GO:0016620">
    <property type="term" value="F:oxidoreductase activity, acting on the aldehyde or oxo group of donors, NAD or NADP as acceptor"/>
    <property type="evidence" value="ECO:0007669"/>
    <property type="project" value="InterPro"/>
</dbReference>
<dbReference type="Gene3D" id="3.40.309.10">
    <property type="entry name" value="Aldehyde Dehydrogenase, Chain A, domain 2"/>
    <property type="match status" value="1"/>
</dbReference>
<dbReference type="Gene3D" id="3.10.129.10">
    <property type="entry name" value="Hotdog Thioesterase"/>
    <property type="match status" value="1"/>
</dbReference>
<dbReference type="InterPro" id="IPR016161">
    <property type="entry name" value="Ald_DH/histidinol_DH"/>
</dbReference>
<dbReference type="InterPro" id="IPR016163">
    <property type="entry name" value="Ald_DH_C"/>
</dbReference>
<dbReference type="InterPro" id="IPR015590">
    <property type="entry name" value="Aldehyde_DH_dom"/>
</dbReference>
<dbReference type="InterPro" id="IPR029069">
    <property type="entry name" value="HotDog_dom_sf"/>
</dbReference>
<dbReference type="InterPro" id="IPR002539">
    <property type="entry name" value="MaoC-like_dom"/>
</dbReference>
<dbReference type="PANTHER" id="PTHR43111">
    <property type="entry name" value="ALDEHYDE DEHYDROGENASE B-RELATED"/>
    <property type="match status" value="1"/>
</dbReference>
<dbReference type="PANTHER" id="PTHR43111:SF1">
    <property type="entry name" value="ALDEHYDE DEHYDROGENASE B-RELATED"/>
    <property type="match status" value="1"/>
</dbReference>
<dbReference type="Pfam" id="PF00171">
    <property type="entry name" value="Aldedh"/>
    <property type="match status" value="1"/>
</dbReference>
<dbReference type="Pfam" id="PF01575">
    <property type="entry name" value="MaoC_dehydratas"/>
    <property type="match status" value="1"/>
</dbReference>
<dbReference type="SUPFAM" id="SSF53720">
    <property type="entry name" value="ALDH-like"/>
    <property type="match status" value="1"/>
</dbReference>
<dbReference type="SUPFAM" id="SSF54637">
    <property type="entry name" value="Thioesterase/thiol ester dehydrase-isomerase"/>
    <property type="match status" value="1"/>
</dbReference>
<proteinExistence type="inferred from homology"/>
<gene>
    <name type="primary">maoC</name>
    <name type="synonym">tynP</name>
</gene>
<reference key="1">
    <citation type="journal article" date="1992" name="J. Bacteriol.">
        <title>A monoamine-regulated Klebsiella aerogenes operon containing the monoamine oxidase structural gene (maoA) and the maoC gene.</title>
        <authorList>
            <person name="Sugino H."/>
            <person name="Sasaki M."/>
            <person name="Azakami H."/>
            <person name="Yamashita M."/>
            <person name="Murooka Y."/>
        </authorList>
    </citation>
    <scope>NUCLEOTIDE SEQUENCE [GENOMIC DNA]</scope>
    <source>
        <strain>W70</strain>
    </source>
</reference>
<organism>
    <name type="scientific">Klebsiella aerogenes</name>
    <name type="common">Enterobacter aerogenes</name>
    <dbReference type="NCBI Taxonomy" id="548"/>
    <lineage>
        <taxon>Bacteria</taxon>
        <taxon>Pseudomonadati</taxon>
        <taxon>Pseudomonadota</taxon>
        <taxon>Gammaproteobacteria</taxon>
        <taxon>Enterobacterales</taxon>
        <taxon>Enterobacteriaceae</taxon>
        <taxon>Klebsiella/Raoultella group</taxon>
        <taxon>Klebsiella</taxon>
    </lineage>
</organism>
<name>MAOC_KLEAE</name>
<feature type="chain" id="PRO_0000056582" description="Protein MaoC">
    <location>
        <begin position="1"/>
        <end position="335"/>
    </location>
</feature>
<feature type="domain" description="MaoC-like">
    <location>
        <begin position="203"/>
        <end position="306"/>
    </location>
</feature>
<feature type="region of interest" description="Disordered" evidence="1">
    <location>
        <begin position="123"/>
        <end position="152"/>
    </location>
</feature>
<feature type="compositionally biased region" description="Gly residues" evidence="1">
    <location>
        <begin position="140"/>
        <end position="151"/>
    </location>
</feature>
<protein>
    <recommendedName>
        <fullName>Protein MaoC</fullName>
    </recommendedName>
</protein>
<accession>P49251</accession>
<evidence type="ECO:0000256" key="1">
    <source>
        <dbReference type="SAM" id="MobiDB-lite"/>
    </source>
</evidence>
<evidence type="ECO:0000305" key="2"/>